<protein>
    <recommendedName>
        <fullName evidence="1">Recombination protein RecR</fullName>
    </recommendedName>
</protein>
<organism>
    <name type="scientific">Leifsonia xyli subsp. xyli (strain CTCB07)</name>
    <dbReference type="NCBI Taxonomy" id="281090"/>
    <lineage>
        <taxon>Bacteria</taxon>
        <taxon>Bacillati</taxon>
        <taxon>Actinomycetota</taxon>
        <taxon>Actinomycetes</taxon>
        <taxon>Micrococcales</taxon>
        <taxon>Microbacteriaceae</taxon>
        <taxon>Leifsonia</taxon>
    </lineage>
</organism>
<dbReference type="EMBL" id="AE016822">
    <property type="protein sequence ID" value="AAT88360.1"/>
    <property type="molecule type" value="Genomic_DNA"/>
</dbReference>
<dbReference type="RefSeq" id="WP_011185363.1">
    <property type="nucleotide sequence ID" value="NC_006087.1"/>
</dbReference>
<dbReference type="SMR" id="Q6AGY5"/>
<dbReference type="STRING" id="281090.Lxx03440"/>
<dbReference type="KEGG" id="lxx:Lxx03440"/>
<dbReference type="eggNOG" id="COG0353">
    <property type="taxonomic scope" value="Bacteria"/>
</dbReference>
<dbReference type="HOGENOM" id="CLU_060739_1_0_11"/>
<dbReference type="Proteomes" id="UP000001306">
    <property type="component" value="Chromosome"/>
</dbReference>
<dbReference type="GO" id="GO:0003677">
    <property type="term" value="F:DNA binding"/>
    <property type="evidence" value="ECO:0007669"/>
    <property type="project" value="UniProtKB-UniRule"/>
</dbReference>
<dbReference type="GO" id="GO:0008270">
    <property type="term" value="F:zinc ion binding"/>
    <property type="evidence" value="ECO:0007669"/>
    <property type="project" value="UniProtKB-KW"/>
</dbReference>
<dbReference type="GO" id="GO:0006310">
    <property type="term" value="P:DNA recombination"/>
    <property type="evidence" value="ECO:0007669"/>
    <property type="project" value="UniProtKB-UniRule"/>
</dbReference>
<dbReference type="GO" id="GO:0006281">
    <property type="term" value="P:DNA repair"/>
    <property type="evidence" value="ECO:0007669"/>
    <property type="project" value="UniProtKB-UniRule"/>
</dbReference>
<dbReference type="CDD" id="cd01025">
    <property type="entry name" value="TOPRIM_recR"/>
    <property type="match status" value="1"/>
</dbReference>
<dbReference type="Gene3D" id="3.30.60.80">
    <property type="match status" value="1"/>
</dbReference>
<dbReference type="Gene3D" id="3.40.1360.10">
    <property type="match status" value="1"/>
</dbReference>
<dbReference type="Gene3D" id="6.10.250.240">
    <property type="match status" value="1"/>
</dbReference>
<dbReference type="Gene3D" id="1.10.8.420">
    <property type="entry name" value="RecR Domain 1"/>
    <property type="match status" value="1"/>
</dbReference>
<dbReference type="HAMAP" id="MF_00017">
    <property type="entry name" value="RecR"/>
    <property type="match status" value="1"/>
</dbReference>
<dbReference type="InterPro" id="IPR000093">
    <property type="entry name" value="DNA_Rcmb_RecR"/>
</dbReference>
<dbReference type="InterPro" id="IPR003583">
    <property type="entry name" value="Hlx-hairpin-Hlx_DNA-bd_motif"/>
</dbReference>
<dbReference type="InterPro" id="IPR023627">
    <property type="entry name" value="Rcmb_RecR"/>
</dbReference>
<dbReference type="InterPro" id="IPR015967">
    <property type="entry name" value="Rcmb_RecR_Znf"/>
</dbReference>
<dbReference type="InterPro" id="IPR006171">
    <property type="entry name" value="TOPRIM_dom"/>
</dbReference>
<dbReference type="InterPro" id="IPR034137">
    <property type="entry name" value="TOPRIM_RecR"/>
</dbReference>
<dbReference type="NCBIfam" id="TIGR00615">
    <property type="entry name" value="recR"/>
    <property type="match status" value="1"/>
</dbReference>
<dbReference type="PANTHER" id="PTHR30446">
    <property type="entry name" value="RECOMBINATION PROTEIN RECR"/>
    <property type="match status" value="1"/>
</dbReference>
<dbReference type="PANTHER" id="PTHR30446:SF0">
    <property type="entry name" value="RECOMBINATION PROTEIN RECR"/>
    <property type="match status" value="1"/>
</dbReference>
<dbReference type="Pfam" id="PF21175">
    <property type="entry name" value="RecR_C"/>
    <property type="match status" value="1"/>
</dbReference>
<dbReference type="Pfam" id="PF21176">
    <property type="entry name" value="RecR_HhH"/>
    <property type="match status" value="1"/>
</dbReference>
<dbReference type="Pfam" id="PF02132">
    <property type="entry name" value="RecR_ZnF"/>
    <property type="match status" value="1"/>
</dbReference>
<dbReference type="Pfam" id="PF13662">
    <property type="entry name" value="Toprim_4"/>
    <property type="match status" value="1"/>
</dbReference>
<dbReference type="SMART" id="SM00278">
    <property type="entry name" value="HhH1"/>
    <property type="match status" value="1"/>
</dbReference>
<dbReference type="SMART" id="SM00493">
    <property type="entry name" value="TOPRIM"/>
    <property type="match status" value="1"/>
</dbReference>
<dbReference type="SUPFAM" id="SSF111304">
    <property type="entry name" value="Recombination protein RecR"/>
    <property type="match status" value="1"/>
</dbReference>
<dbReference type="PROSITE" id="PS01300">
    <property type="entry name" value="RECR"/>
    <property type="match status" value="1"/>
</dbReference>
<dbReference type="PROSITE" id="PS50880">
    <property type="entry name" value="TOPRIM"/>
    <property type="match status" value="1"/>
</dbReference>
<sequence length="198" mass="21744">MYAGIVQELIDELGRLPGIGPKSAQRIAFHILQTEAFDVTRLAEVLLEVRDKVRFCEICGNVSEQATCSICRDPRRDPALICVVEEAKDVVAIERTREFRGLYHVLGGAISPIDGVGPDDLRIRQLVQRLADGTVQEVIIATDPNLEGEATATYLSRLLTTLEVRVTRLASGLPVGGDLEYADEVTLGRAFEGRRQVS</sequence>
<reference key="1">
    <citation type="journal article" date="2004" name="Mol. Plant Microbe Interact.">
        <title>The genome sequence of the Gram-positive sugarcane pathogen Leifsonia xyli subsp. xyli.</title>
        <authorList>
            <person name="Monteiro-Vitorello C.B."/>
            <person name="Camargo L.E.A."/>
            <person name="Van Sluys M.A."/>
            <person name="Kitajima J.P."/>
            <person name="Truffi D."/>
            <person name="do Amaral A.M."/>
            <person name="Harakava R."/>
            <person name="de Oliveira J.C.F."/>
            <person name="Wood D."/>
            <person name="de Oliveira M.C."/>
            <person name="Miyaki C.Y."/>
            <person name="Takita M.A."/>
            <person name="da Silva A.C.R."/>
            <person name="Furlan L.R."/>
            <person name="Carraro D.M."/>
            <person name="Camarotte G."/>
            <person name="Almeida N.F. Jr."/>
            <person name="Carrer H."/>
            <person name="Coutinho L.L."/>
            <person name="El-Dorry H.A."/>
            <person name="Ferro M.I.T."/>
            <person name="Gagliardi P.R."/>
            <person name="Giglioti E."/>
            <person name="Goldman M.H.S."/>
            <person name="Goldman G.H."/>
            <person name="Kimura E.T."/>
            <person name="Ferro E.S."/>
            <person name="Kuramae E.E."/>
            <person name="Lemos E.G.M."/>
            <person name="Lemos M.V.F."/>
            <person name="Mauro S.M.Z."/>
            <person name="Machado M.A."/>
            <person name="Marino C.L."/>
            <person name="Menck C.F."/>
            <person name="Nunes L.R."/>
            <person name="Oliveira R.C."/>
            <person name="Pereira G.G."/>
            <person name="Siqueira W."/>
            <person name="de Souza A.A."/>
            <person name="Tsai S.M."/>
            <person name="Zanca A.S."/>
            <person name="Simpson A.J.G."/>
            <person name="Brumbley S.M."/>
            <person name="Setubal J.C."/>
        </authorList>
    </citation>
    <scope>NUCLEOTIDE SEQUENCE [LARGE SCALE GENOMIC DNA]</scope>
    <source>
        <strain>CTCB07</strain>
    </source>
</reference>
<accession>Q6AGY5</accession>
<keyword id="KW-0227">DNA damage</keyword>
<keyword id="KW-0233">DNA recombination</keyword>
<keyword id="KW-0234">DNA repair</keyword>
<keyword id="KW-0479">Metal-binding</keyword>
<keyword id="KW-1185">Reference proteome</keyword>
<keyword id="KW-0862">Zinc</keyword>
<keyword id="KW-0863">Zinc-finger</keyword>
<feature type="chain" id="PRO_0000190342" description="Recombination protein RecR">
    <location>
        <begin position="1"/>
        <end position="198"/>
    </location>
</feature>
<feature type="domain" description="Toprim" evidence="1">
    <location>
        <begin position="79"/>
        <end position="174"/>
    </location>
</feature>
<feature type="zinc finger region" description="C4-type" evidence="1">
    <location>
        <begin position="56"/>
        <end position="71"/>
    </location>
</feature>
<comment type="function">
    <text evidence="1">May play a role in DNA repair. It seems to be involved in an RecBC-independent recombinational process of DNA repair. It may act with RecF and RecO.</text>
</comment>
<comment type="similarity">
    <text evidence="1">Belongs to the RecR family.</text>
</comment>
<evidence type="ECO:0000255" key="1">
    <source>
        <dbReference type="HAMAP-Rule" id="MF_00017"/>
    </source>
</evidence>
<proteinExistence type="inferred from homology"/>
<name>RECR_LEIXX</name>
<gene>
    <name evidence="1" type="primary">recR</name>
    <name type="ordered locus">Lxx03440</name>
</gene>